<accession>Q5YSC3</accession>
<feature type="chain" id="PRO_0000229258" description="Ribosome maturation factor RimP">
    <location>
        <begin position="1"/>
        <end position="217"/>
    </location>
</feature>
<comment type="function">
    <text evidence="1">Required for maturation of 30S ribosomal subunits.</text>
</comment>
<comment type="subcellular location">
    <subcellularLocation>
        <location evidence="1">Cytoplasm</location>
    </subcellularLocation>
</comment>
<comment type="similarity">
    <text evidence="1">Belongs to the RimP family.</text>
</comment>
<keyword id="KW-0963">Cytoplasm</keyword>
<keyword id="KW-1185">Reference proteome</keyword>
<keyword id="KW-0690">Ribosome biogenesis</keyword>
<sequence>MPMPTEERVSQLVAGLVERRGFDLEGVEITRAGSRADAQPRVTVVVDSDGAADLDAVAELSSEMSVVLDDTDIFGDSPYLLEVTTPGVDRPLTAPRHWRRAQGRKVRITLRPGAEPPDPGGSAGFEARVGVLDGEQIALVLGGKRNPHRVRVPLADIERAVVQVEFSPPGARELELAGGVAPGRPDPGTDRAIAADGAISEETSTAAASDPTEGIEE</sequence>
<name>RIMP_NOCFA</name>
<proteinExistence type="inferred from homology"/>
<reference key="1">
    <citation type="journal article" date="2004" name="Proc. Natl. Acad. Sci. U.S.A.">
        <title>The complete genomic sequence of Nocardia farcinica IFM 10152.</title>
        <authorList>
            <person name="Ishikawa J."/>
            <person name="Yamashita A."/>
            <person name="Mikami Y."/>
            <person name="Hoshino Y."/>
            <person name="Kurita H."/>
            <person name="Hotta K."/>
            <person name="Shiba T."/>
            <person name="Hattori M."/>
        </authorList>
    </citation>
    <scope>NUCLEOTIDE SEQUENCE [LARGE SCALE GENOMIC DNA]</scope>
    <source>
        <strain>IFM 10152</strain>
    </source>
</reference>
<organism>
    <name type="scientific">Nocardia farcinica (strain IFM 10152)</name>
    <dbReference type="NCBI Taxonomy" id="247156"/>
    <lineage>
        <taxon>Bacteria</taxon>
        <taxon>Bacillati</taxon>
        <taxon>Actinomycetota</taxon>
        <taxon>Actinomycetes</taxon>
        <taxon>Mycobacteriales</taxon>
        <taxon>Nocardiaceae</taxon>
        <taxon>Nocardia</taxon>
    </lineage>
</organism>
<dbReference type="EMBL" id="AP006618">
    <property type="protein sequence ID" value="BAD58918.1"/>
    <property type="molecule type" value="Genomic_DNA"/>
</dbReference>
<dbReference type="RefSeq" id="WP_011210603.1">
    <property type="nucleotide sequence ID" value="NC_006361.1"/>
</dbReference>
<dbReference type="SMR" id="Q5YSC3"/>
<dbReference type="STRING" id="247156.NFA_40690"/>
<dbReference type="GeneID" id="61134712"/>
<dbReference type="KEGG" id="nfa:NFA_40690"/>
<dbReference type="eggNOG" id="COG0779">
    <property type="taxonomic scope" value="Bacteria"/>
</dbReference>
<dbReference type="HOGENOM" id="CLU_070525_3_0_11"/>
<dbReference type="OrthoDB" id="9805006at2"/>
<dbReference type="Proteomes" id="UP000006820">
    <property type="component" value="Chromosome"/>
</dbReference>
<dbReference type="GO" id="GO:0005829">
    <property type="term" value="C:cytosol"/>
    <property type="evidence" value="ECO:0007669"/>
    <property type="project" value="TreeGrafter"/>
</dbReference>
<dbReference type="GO" id="GO:0000028">
    <property type="term" value="P:ribosomal small subunit assembly"/>
    <property type="evidence" value="ECO:0007669"/>
    <property type="project" value="TreeGrafter"/>
</dbReference>
<dbReference type="GO" id="GO:0006412">
    <property type="term" value="P:translation"/>
    <property type="evidence" value="ECO:0007669"/>
    <property type="project" value="TreeGrafter"/>
</dbReference>
<dbReference type="CDD" id="cd01734">
    <property type="entry name" value="YlxS_C"/>
    <property type="match status" value="1"/>
</dbReference>
<dbReference type="Gene3D" id="3.30.300.70">
    <property type="entry name" value="RimP-like superfamily, N-terminal"/>
    <property type="match status" value="1"/>
</dbReference>
<dbReference type="HAMAP" id="MF_01077">
    <property type="entry name" value="RimP"/>
    <property type="match status" value="1"/>
</dbReference>
<dbReference type="InterPro" id="IPR003728">
    <property type="entry name" value="Ribosome_maturation_RimP"/>
</dbReference>
<dbReference type="InterPro" id="IPR028998">
    <property type="entry name" value="RimP_C"/>
</dbReference>
<dbReference type="InterPro" id="IPR028989">
    <property type="entry name" value="RimP_N"/>
</dbReference>
<dbReference type="InterPro" id="IPR035956">
    <property type="entry name" value="RimP_N_sf"/>
</dbReference>
<dbReference type="NCBIfam" id="NF000930">
    <property type="entry name" value="PRK00092.2-2"/>
    <property type="match status" value="1"/>
</dbReference>
<dbReference type="PANTHER" id="PTHR33867">
    <property type="entry name" value="RIBOSOME MATURATION FACTOR RIMP"/>
    <property type="match status" value="1"/>
</dbReference>
<dbReference type="PANTHER" id="PTHR33867:SF1">
    <property type="entry name" value="RIBOSOME MATURATION FACTOR RIMP"/>
    <property type="match status" value="1"/>
</dbReference>
<dbReference type="Pfam" id="PF17384">
    <property type="entry name" value="DUF150_C"/>
    <property type="match status" value="1"/>
</dbReference>
<dbReference type="Pfam" id="PF02576">
    <property type="entry name" value="RimP_N"/>
    <property type="match status" value="1"/>
</dbReference>
<dbReference type="SUPFAM" id="SSF75420">
    <property type="entry name" value="YhbC-like, N-terminal domain"/>
    <property type="match status" value="1"/>
</dbReference>
<gene>
    <name evidence="1" type="primary">rimP</name>
    <name type="ordered locus">NFA_40690</name>
</gene>
<evidence type="ECO:0000255" key="1">
    <source>
        <dbReference type="HAMAP-Rule" id="MF_01077"/>
    </source>
</evidence>
<protein>
    <recommendedName>
        <fullName evidence="1">Ribosome maturation factor RimP</fullName>
    </recommendedName>
</protein>